<organism>
    <name type="scientific">Mycobacterium tuberculosis (strain CDC 1551 / Oshkosh)</name>
    <dbReference type="NCBI Taxonomy" id="83331"/>
    <lineage>
        <taxon>Bacteria</taxon>
        <taxon>Bacillati</taxon>
        <taxon>Actinomycetota</taxon>
        <taxon>Actinomycetes</taxon>
        <taxon>Mycobacteriales</taxon>
        <taxon>Mycobacteriaceae</taxon>
        <taxon>Mycobacterium</taxon>
        <taxon>Mycobacterium tuberculosis complex</taxon>
    </lineage>
</organism>
<protein>
    <recommendedName>
        <fullName>Putative fatty-acid--CoA ligase fadD21</fullName>
        <ecNumber>6.2.1.-</ecNumber>
    </recommendedName>
    <alternativeName>
        <fullName>Acyl-CoA synthetase</fullName>
    </alternativeName>
</protein>
<gene>
    <name type="primary">fadD21</name>
    <name type="ordered locus">MT1222</name>
</gene>
<name>FAD21_MYCTO</name>
<feature type="chain" id="PRO_0000426838" description="Putative fatty-acid--CoA ligase fadD21">
    <location>
        <begin position="1"/>
        <end position="578"/>
    </location>
</feature>
<reference key="1">
    <citation type="journal article" date="2002" name="J. Bacteriol.">
        <title>Whole-genome comparison of Mycobacterium tuberculosis clinical and laboratory strains.</title>
        <authorList>
            <person name="Fleischmann R.D."/>
            <person name="Alland D."/>
            <person name="Eisen J.A."/>
            <person name="Carpenter L."/>
            <person name="White O."/>
            <person name="Peterson J.D."/>
            <person name="DeBoy R.T."/>
            <person name="Dodson R.J."/>
            <person name="Gwinn M.L."/>
            <person name="Haft D.H."/>
            <person name="Hickey E.K."/>
            <person name="Kolonay J.F."/>
            <person name="Nelson W.C."/>
            <person name="Umayam L.A."/>
            <person name="Ermolaeva M.D."/>
            <person name="Salzberg S.L."/>
            <person name="Delcher A."/>
            <person name="Utterback T.R."/>
            <person name="Weidman J.F."/>
            <person name="Khouri H.M."/>
            <person name="Gill J."/>
            <person name="Mikula A."/>
            <person name="Bishai W."/>
            <person name="Jacobs W.R. Jr."/>
            <person name="Venter J.C."/>
            <person name="Fraser C.M."/>
        </authorList>
    </citation>
    <scope>NUCLEOTIDE SEQUENCE [LARGE SCALE GENOMIC DNA]</scope>
    <source>
        <strain>CDC 1551 / Oshkosh</strain>
    </source>
</reference>
<evidence type="ECO:0000305" key="1"/>
<keyword id="KW-0276">Fatty acid metabolism</keyword>
<keyword id="KW-0436">Ligase</keyword>
<keyword id="KW-0443">Lipid metabolism</keyword>
<keyword id="KW-1185">Reference proteome</keyword>
<proteinExistence type="inferred from homology"/>
<dbReference type="EC" id="6.2.1.-"/>
<dbReference type="EMBL" id="AE000516">
    <property type="protein sequence ID" value="AAK45479.1"/>
    <property type="molecule type" value="Genomic_DNA"/>
</dbReference>
<dbReference type="PIR" id="A70877">
    <property type="entry name" value="A70877"/>
</dbReference>
<dbReference type="RefSeq" id="WP_003406196.1">
    <property type="nucleotide sequence ID" value="NZ_KK341227.1"/>
</dbReference>
<dbReference type="SMR" id="P9WQ48"/>
<dbReference type="KEGG" id="mtc:MT1222"/>
<dbReference type="PATRIC" id="fig|83331.31.peg.1321"/>
<dbReference type="HOGENOM" id="CLU_000022_23_7_11"/>
<dbReference type="Proteomes" id="UP000001020">
    <property type="component" value="Chromosome"/>
</dbReference>
<dbReference type="GO" id="GO:0005886">
    <property type="term" value="C:plasma membrane"/>
    <property type="evidence" value="ECO:0007669"/>
    <property type="project" value="TreeGrafter"/>
</dbReference>
<dbReference type="GO" id="GO:0070566">
    <property type="term" value="F:adenylyltransferase activity"/>
    <property type="evidence" value="ECO:0007669"/>
    <property type="project" value="TreeGrafter"/>
</dbReference>
<dbReference type="GO" id="GO:0016874">
    <property type="term" value="F:ligase activity"/>
    <property type="evidence" value="ECO:0007669"/>
    <property type="project" value="UniProtKB-KW"/>
</dbReference>
<dbReference type="GO" id="GO:0071766">
    <property type="term" value="P:Actinobacterium-type cell wall biogenesis"/>
    <property type="evidence" value="ECO:0007669"/>
    <property type="project" value="UniProtKB-ARBA"/>
</dbReference>
<dbReference type="GO" id="GO:0006633">
    <property type="term" value="P:fatty acid biosynthetic process"/>
    <property type="evidence" value="ECO:0007669"/>
    <property type="project" value="TreeGrafter"/>
</dbReference>
<dbReference type="CDD" id="cd05931">
    <property type="entry name" value="FAAL"/>
    <property type="match status" value="1"/>
</dbReference>
<dbReference type="FunFam" id="3.30.300.30:FF:000016">
    <property type="entry name" value="Fatty-acid-CoA ligase FadD26"/>
    <property type="match status" value="1"/>
</dbReference>
<dbReference type="FunFam" id="3.40.50.12780:FF:000013">
    <property type="entry name" value="Long-chain-fatty-acid--AMP ligase FadD32"/>
    <property type="match status" value="1"/>
</dbReference>
<dbReference type="Gene3D" id="3.30.300.30">
    <property type="match status" value="1"/>
</dbReference>
<dbReference type="Gene3D" id="3.40.50.12780">
    <property type="entry name" value="N-terminal domain of ligase-like"/>
    <property type="match status" value="1"/>
</dbReference>
<dbReference type="InterPro" id="IPR025110">
    <property type="entry name" value="AMP-bd_C"/>
</dbReference>
<dbReference type="InterPro" id="IPR045851">
    <property type="entry name" value="AMP-bd_C_sf"/>
</dbReference>
<dbReference type="InterPro" id="IPR000873">
    <property type="entry name" value="AMP-dep_synth/lig_dom"/>
</dbReference>
<dbReference type="InterPro" id="IPR042099">
    <property type="entry name" value="ANL_N_sf"/>
</dbReference>
<dbReference type="InterPro" id="IPR040097">
    <property type="entry name" value="FAAL/FAAC"/>
</dbReference>
<dbReference type="InterPro" id="IPR054928">
    <property type="entry name" value="FAAL_FadD21"/>
</dbReference>
<dbReference type="NCBIfam" id="NF038337">
    <property type="entry name" value="FAAL_FadD21"/>
    <property type="match status" value="1"/>
</dbReference>
<dbReference type="NCBIfam" id="NF004509">
    <property type="entry name" value="PRK05850.1"/>
    <property type="match status" value="1"/>
</dbReference>
<dbReference type="PANTHER" id="PTHR22754:SF32">
    <property type="entry name" value="DISCO-INTERACTING PROTEIN 2"/>
    <property type="match status" value="1"/>
</dbReference>
<dbReference type="PANTHER" id="PTHR22754">
    <property type="entry name" value="DISCO-INTERACTING PROTEIN 2 DIP2 -RELATED"/>
    <property type="match status" value="1"/>
</dbReference>
<dbReference type="Pfam" id="PF00501">
    <property type="entry name" value="AMP-binding"/>
    <property type="match status" value="1"/>
</dbReference>
<dbReference type="Pfam" id="PF23024">
    <property type="entry name" value="AMP-dom_DIP2-like"/>
    <property type="match status" value="1"/>
</dbReference>
<dbReference type="SUPFAM" id="SSF56801">
    <property type="entry name" value="Acetyl-CoA synthetase-like"/>
    <property type="match status" value="1"/>
</dbReference>
<sequence length="578" mass="62757">MSDSSVLSLLRERAGLQPDDAAFTYIDYEQDWAGITETLTWSEVFRRTRIVAHEVRRHCTTGDRAVILAPQGLAYIAAFLGSMQAGAIAVPLSVPQIGSHDERVSAVLADASPSVILTTSAVAEAVAEHIHRPNTNNVGPIIEIDSLDLTGNSPSFRVKDLPSAAYLQYTSGSTRAPAGVMISHRNLQANFQQLMSNYFGDRNGVAPPDTTIVSWLPFYHDMGLVLGIIAPILGGYRSELTSPLAFLQRPARWLHSLANGSPSWSAAPNFAFELAVRKTTDADIEGLDLGNVLGITSGAERVHPNTLSRFCNRFAPYNFREDMIRPSYGLAEATLYVASRNSGDKPEVVYFEPDKLSTGSANRCEPKTGTPLLSYGMPTSPTVRIVDPDTCIECPAGTIGEIWVKGDNVAEGYWNKPDETRHTFGAMLVHPSAGTPDGSWLRTGDLGFLSEDEMFIVGRMKDMLIVYGRNHYPEDIESTVQEITGGRVAAISVPVDHTEKLVTVIELKLLGDSAGEAMDELDVIKNNVTAAISRSHGLNVADLVLVPPGSIPTTTSGKIRRAACVEQYRLQQFTRLDG</sequence>
<accession>P9WQ48</accession>
<accession>L0T5X7</accession>
<accession>O50441</accession>
<accession>P63523</accession>
<comment type="similarity">
    <text evidence="1">Belongs to the ATP-dependent AMP-binding enzyme family.</text>
</comment>